<sequence length="134" mass="15226">MKPSERRKARRLAVQAIYSWQLSGNNIADVEHEFLTEQSLDGVDVAYFRELFSGVATKKTQLDELIIPHLERPIDEVSPVEKAIVRLATYELTFRKDVPYKVAINEAIELAKAFGADESHKFVNGLLDKLVARK</sequence>
<reference key="1">
    <citation type="submission" date="2008-12" db="EMBL/GenBank/DDBJ databases">
        <title>Complete sequence of chromosome of Shewanella baltica OS223.</title>
        <authorList>
            <consortium name="US DOE Joint Genome Institute"/>
            <person name="Lucas S."/>
            <person name="Copeland A."/>
            <person name="Lapidus A."/>
            <person name="Glavina del Rio T."/>
            <person name="Dalin E."/>
            <person name="Tice H."/>
            <person name="Bruce D."/>
            <person name="Goodwin L."/>
            <person name="Pitluck S."/>
            <person name="Chertkov O."/>
            <person name="Meincke L."/>
            <person name="Brettin T."/>
            <person name="Detter J.C."/>
            <person name="Han C."/>
            <person name="Kuske C.R."/>
            <person name="Larimer F."/>
            <person name="Land M."/>
            <person name="Hauser L."/>
            <person name="Kyrpides N."/>
            <person name="Ovchinnikova G."/>
            <person name="Brettar I."/>
            <person name="Rodrigues J."/>
            <person name="Konstantinidis K."/>
            <person name="Tiedje J."/>
        </authorList>
    </citation>
    <scope>NUCLEOTIDE SEQUENCE [LARGE SCALE GENOMIC DNA]</scope>
    <source>
        <strain>OS223</strain>
    </source>
</reference>
<keyword id="KW-0694">RNA-binding</keyword>
<keyword id="KW-0804">Transcription</keyword>
<keyword id="KW-0889">Transcription antitermination</keyword>
<keyword id="KW-0805">Transcription regulation</keyword>
<comment type="function">
    <text evidence="1">Involved in transcription antitermination. Required for transcription of ribosomal RNA (rRNA) genes. Binds specifically to the boxA antiterminator sequence of the ribosomal RNA (rrn) operons.</text>
</comment>
<comment type="similarity">
    <text evidence="1">Belongs to the NusB family.</text>
</comment>
<organism>
    <name type="scientific">Shewanella baltica (strain OS223)</name>
    <dbReference type="NCBI Taxonomy" id="407976"/>
    <lineage>
        <taxon>Bacteria</taxon>
        <taxon>Pseudomonadati</taxon>
        <taxon>Pseudomonadota</taxon>
        <taxon>Gammaproteobacteria</taxon>
        <taxon>Alteromonadales</taxon>
        <taxon>Shewanellaceae</taxon>
        <taxon>Shewanella</taxon>
    </lineage>
</organism>
<dbReference type="EMBL" id="CP001252">
    <property type="protein sequence ID" value="ACK45728.1"/>
    <property type="molecule type" value="Genomic_DNA"/>
</dbReference>
<dbReference type="RefSeq" id="WP_006082638.1">
    <property type="nucleotide sequence ID" value="NC_011663.1"/>
</dbReference>
<dbReference type="SMR" id="B8E6W7"/>
<dbReference type="GeneID" id="67444384"/>
<dbReference type="KEGG" id="sbp:Sbal223_1215"/>
<dbReference type="HOGENOM" id="CLU_087843_4_1_6"/>
<dbReference type="Proteomes" id="UP000002507">
    <property type="component" value="Chromosome"/>
</dbReference>
<dbReference type="GO" id="GO:0005829">
    <property type="term" value="C:cytosol"/>
    <property type="evidence" value="ECO:0007669"/>
    <property type="project" value="TreeGrafter"/>
</dbReference>
<dbReference type="GO" id="GO:0003723">
    <property type="term" value="F:RNA binding"/>
    <property type="evidence" value="ECO:0007669"/>
    <property type="project" value="UniProtKB-UniRule"/>
</dbReference>
<dbReference type="GO" id="GO:0006353">
    <property type="term" value="P:DNA-templated transcription termination"/>
    <property type="evidence" value="ECO:0007669"/>
    <property type="project" value="UniProtKB-UniRule"/>
</dbReference>
<dbReference type="GO" id="GO:0031564">
    <property type="term" value="P:transcription antitermination"/>
    <property type="evidence" value="ECO:0007669"/>
    <property type="project" value="UniProtKB-KW"/>
</dbReference>
<dbReference type="CDD" id="cd00619">
    <property type="entry name" value="Terminator_NusB"/>
    <property type="match status" value="1"/>
</dbReference>
<dbReference type="FunFam" id="1.10.940.10:FF:000001">
    <property type="entry name" value="Transcription antitermination factor NusB"/>
    <property type="match status" value="1"/>
</dbReference>
<dbReference type="Gene3D" id="1.10.940.10">
    <property type="entry name" value="NusB-like"/>
    <property type="match status" value="1"/>
</dbReference>
<dbReference type="HAMAP" id="MF_00073">
    <property type="entry name" value="NusB"/>
    <property type="match status" value="1"/>
</dbReference>
<dbReference type="InterPro" id="IPR035926">
    <property type="entry name" value="NusB-like_sf"/>
</dbReference>
<dbReference type="InterPro" id="IPR011605">
    <property type="entry name" value="NusB_fam"/>
</dbReference>
<dbReference type="InterPro" id="IPR006027">
    <property type="entry name" value="NusB_RsmB_TIM44"/>
</dbReference>
<dbReference type="NCBIfam" id="TIGR01951">
    <property type="entry name" value="nusB"/>
    <property type="match status" value="1"/>
</dbReference>
<dbReference type="PANTHER" id="PTHR11078:SF3">
    <property type="entry name" value="ANTITERMINATION NUSB DOMAIN-CONTAINING PROTEIN"/>
    <property type="match status" value="1"/>
</dbReference>
<dbReference type="PANTHER" id="PTHR11078">
    <property type="entry name" value="N UTILIZATION SUBSTANCE PROTEIN B-RELATED"/>
    <property type="match status" value="1"/>
</dbReference>
<dbReference type="Pfam" id="PF01029">
    <property type="entry name" value="NusB"/>
    <property type="match status" value="1"/>
</dbReference>
<dbReference type="SUPFAM" id="SSF48013">
    <property type="entry name" value="NusB-like"/>
    <property type="match status" value="1"/>
</dbReference>
<feature type="chain" id="PRO_1000192455" description="Transcription antitermination protein NusB">
    <location>
        <begin position="1"/>
        <end position="134"/>
    </location>
</feature>
<accession>B8E6W7</accession>
<gene>
    <name evidence="1" type="primary">nusB</name>
    <name type="ordered locus">Sbal223_1215</name>
</gene>
<proteinExistence type="inferred from homology"/>
<name>NUSB_SHEB2</name>
<evidence type="ECO:0000255" key="1">
    <source>
        <dbReference type="HAMAP-Rule" id="MF_00073"/>
    </source>
</evidence>
<protein>
    <recommendedName>
        <fullName evidence="1">Transcription antitermination protein NusB</fullName>
    </recommendedName>
    <alternativeName>
        <fullName evidence="1">Antitermination factor NusB</fullName>
    </alternativeName>
</protein>